<sequence>MAAAAEESGWRRVGFVGAGRMAEAIAQGLIQAGKVEAEHVLASAPSDRNLCRFRAMGCQTTHSNLEVLHSCSLVFFATKPHILPAVLVEVAPAVTAEHILVSVAAGVSLSTLEKLLPPMARVLRVSPNLPCIVQEGAMVMARGCCAGSYEAQLLRSLLEACGQCEEVPEAQVDVHTGLSGSGVAFVCAFSEALAEGAIKMGMPSGLAHRIAAQTLLGTAKVLLQKGQHPAQLRTDVCTPGGTTIYGLHVLEQGGLRATAMSAVEAATCRARELSRNPSPVVAQVPSVLQALQGEGALAHREHSSVARS</sequence>
<gene>
    <name evidence="2" type="primary">PYCR3</name>
    <name type="synonym">PYCRL</name>
</gene>
<proteinExistence type="evidence at transcript level"/>
<organism>
    <name type="scientific">Bos taurus</name>
    <name type="common">Bovine</name>
    <dbReference type="NCBI Taxonomy" id="9913"/>
    <lineage>
        <taxon>Eukaryota</taxon>
        <taxon>Metazoa</taxon>
        <taxon>Chordata</taxon>
        <taxon>Craniata</taxon>
        <taxon>Vertebrata</taxon>
        <taxon>Euteleostomi</taxon>
        <taxon>Mammalia</taxon>
        <taxon>Eutheria</taxon>
        <taxon>Laurasiatheria</taxon>
        <taxon>Artiodactyla</taxon>
        <taxon>Ruminantia</taxon>
        <taxon>Pecora</taxon>
        <taxon>Bovidae</taxon>
        <taxon>Bovinae</taxon>
        <taxon>Bos</taxon>
    </lineage>
</organism>
<reference key="1">
    <citation type="journal article" date="2005" name="BMC Genomics">
        <title>Characterization of 954 bovine full-CDS cDNA sequences.</title>
        <authorList>
            <person name="Harhay G.P."/>
            <person name="Sonstegard T.S."/>
            <person name="Keele J.W."/>
            <person name="Heaton M.P."/>
            <person name="Clawson M.L."/>
            <person name="Snelling W.M."/>
            <person name="Wiedmann R.T."/>
            <person name="Van Tassell C.P."/>
            <person name="Smith T.P.L."/>
        </authorList>
    </citation>
    <scope>NUCLEOTIDE SEQUENCE [LARGE SCALE MRNA]</scope>
</reference>
<reference key="2">
    <citation type="submission" date="2007-07" db="EMBL/GenBank/DDBJ databases">
        <authorList>
            <consortium name="NIH - Mammalian Gene Collection (MGC) project"/>
        </authorList>
    </citation>
    <scope>NUCLEOTIDE SEQUENCE [LARGE SCALE MRNA]</scope>
    <source>
        <strain>Hereford</strain>
        <tissue>Fetal cerebellum</tissue>
    </source>
</reference>
<feature type="chain" id="PRO_0000324560" description="Pyrroline-5-carboxylate reductase 3">
    <location>
        <begin position="1"/>
        <end position="308"/>
    </location>
</feature>
<name>P5CR3_BOVIN</name>
<dbReference type="EC" id="1.5.1.2" evidence="2"/>
<dbReference type="EMBL" id="BT021789">
    <property type="protein sequence ID" value="AAX46636.1"/>
    <property type="molecule type" value="mRNA"/>
</dbReference>
<dbReference type="EMBL" id="BC149378">
    <property type="protein sequence ID" value="AAI49379.1"/>
    <property type="molecule type" value="mRNA"/>
</dbReference>
<dbReference type="RefSeq" id="NP_001014906.1">
    <property type="nucleotide sequence ID" value="NM_001014906.1"/>
</dbReference>
<dbReference type="SMR" id="Q58D08"/>
<dbReference type="FunCoup" id="Q58D08">
    <property type="interactions" value="525"/>
</dbReference>
<dbReference type="STRING" id="9913.ENSBTAP00000022364"/>
<dbReference type="iPTMnet" id="Q58D08"/>
<dbReference type="PaxDb" id="9913-ENSBTAP00000022364"/>
<dbReference type="PeptideAtlas" id="Q58D08"/>
<dbReference type="GeneID" id="512526"/>
<dbReference type="KEGG" id="bta:512526"/>
<dbReference type="CTD" id="65263"/>
<dbReference type="VEuPathDB" id="HostDB:ENSBTAG00000016810"/>
<dbReference type="eggNOG" id="KOG3124">
    <property type="taxonomic scope" value="Eukaryota"/>
</dbReference>
<dbReference type="HOGENOM" id="CLU_042344_3_0_1"/>
<dbReference type="InParanoid" id="Q58D08"/>
<dbReference type="OMA" id="AKQTCLG"/>
<dbReference type="OrthoDB" id="10263291at2759"/>
<dbReference type="Reactome" id="R-BTA-8964539">
    <property type="pathway name" value="Glutamate and glutamine metabolism"/>
</dbReference>
<dbReference type="UniPathway" id="UPA00098">
    <property type="reaction ID" value="UER00361"/>
</dbReference>
<dbReference type="Proteomes" id="UP000009136">
    <property type="component" value="Chromosome 14"/>
</dbReference>
<dbReference type="Bgee" id="ENSBTAG00000016810">
    <property type="expression patterns" value="Expressed in theca cell and 107 other cell types or tissues"/>
</dbReference>
<dbReference type="GO" id="GO:0005829">
    <property type="term" value="C:cytosol"/>
    <property type="evidence" value="ECO:0000250"/>
    <property type="project" value="UniProtKB"/>
</dbReference>
<dbReference type="GO" id="GO:0004735">
    <property type="term" value="F:pyrroline-5-carboxylate reductase activity"/>
    <property type="evidence" value="ECO:0000250"/>
    <property type="project" value="UniProtKB"/>
</dbReference>
<dbReference type="GO" id="GO:0055129">
    <property type="term" value="P:L-proline biosynthetic process"/>
    <property type="evidence" value="ECO:0000250"/>
    <property type="project" value="UniProtKB"/>
</dbReference>
<dbReference type="FunFam" id="3.40.50.720:FF:000367">
    <property type="entry name" value="Pyrroline-5-carboxylate reductase"/>
    <property type="match status" value="1"/>
</dbReference>
<dbReference type="FunFam" id="1.10.3730.10:FF:000003">
    <property type="entry name" value="Pyrroline-5-carboxylate reductase 1, mitochondrial"/>
    <property type="match status" value="1"/>
</dbReference>
<dbReference type="Gene3D" id="3.40.50.720">
    <property type="entry name" value="NAD(P)-binding Rossmann-like Domain"/>
    <property type="match status" value="1"/>
</dbReference>
<dbReference type="Gene3D" id="1.10.3730.10">
    <property type="entry name" value="ProC C-terminal domain-like"/>
    <property type="match status" value="1"/>
</dbReference>
<dbReference type="HAMAP" id="MF_01925">
    <property type="entry name" value="P5C_reductase"/>
    <property type="match status" value="1"/>
</dbReference>
<dbReference type="InterPro" id="IPR008927">
    <property type="entry name" value="6-PGluconate_DH-like_C_sf"/>
</dbReference>
<dbReference type="InterPro" id="IPR036291">
    <property type="entry name" value="NAD(P)-bd_dom_sf"/>
</dbReference>
<dbReference type="InterPro" id="IPR028939">
    <property type="entry name" value="P5C_Rdtase_cat_N"/>
</dbReference>
<dbReference type="InterPro" id="IPR053790">
    <property type="entry name" value="P5CR-like_CS"/>
</dbReference>
<dbReference type="InterPro" id="IPR029036">
    <property type="entry name" value="P5CR_dimer"/>
</dbReference>
<dbReference type="InterPro" id="IPR000304">
    <property type="entry name" value="Pyrroline-COOH_reductase"/>
</dbReference>
<dbReference type="NCBIfam" id="TIGR00112">
    <property type="entry name" value="proC"/>
    <property type="match status" value="1"/>
</dbReference>
<dbReference type="PANTHER" id="PTHR11645">
    <property type="entry name" value="PYRROLINE-5-CARBOXYLATE REDUCTASE"/>
    <property type="match status" value="1"/>
</dbReference>
<dbReference type="PANTHER" id="PTHR11645:SF0">
    <property type="entry name" value="PYRROLINE-5-CARBOXYLATE REDUCTASE 3"/>
    <property type="match status" value="1"/>
</dbReference>
<dbReference type="Pfam" id="PF03807">
    <property type="entry name" value="F420_oxidored"/>
    <property type="match status" value="1"/>
</dbReference>
<dbReference type="Pfam" id="PF14748">
    <property type="entry name" value="P5CR_dimer"/>
    <property type="match status" value="1"/>
</dbReference>
<dbReference type="PIRSF" id="PIRSF000193">
    <property type="entry name" value="Pyrrol-5-carb_rd"/>
    <property type="match status" value="1"/>
</dbReference>
<dbReference type="SUPFAM" id="SSF48179">
    <property type="entry name" value="6-phosphogluconate dehydrogenase C-terminal domain-like"/>
    <property type="match status" value="1"/>
</dbReference>
<dbReference type="SUPFAM" id="SSF51735">
    <property type="entry name" value="NAD(P)-binding Rossmann-fold domains"/>
    <property type="match status" value="1"/>
</dbReference>
<dbReference type="PROSITE" id="PS00521">
    <property type="entry name" value="P5CR"/>
    <property type="match status" value="1"/>
</dbReference>
<keyword id="KW-0028">Amino-acid biosynthesis</keyword>
<keyword id="KW-0963">Cytoplasm</keyword>
<keyword id="KW-0521">NADP</keyword>
<keyword id="KW-0560">Oxidoreductase</keyword>
<keyword id="KW-0641">Proline biosynthesis</keyword>
<keyword id="KW-1185">Reference proteome</keyword>
<protein>
    <recommendedName>
        <fullName evidence="2">Pyrroline-5-carboxylate reductase 3</fullName>
        <shortName>P5C reductase 3</shortName>
        <shortName>P5CR 3</shortName>
        <ecNumber evidence="2">1.5.1.2</ecNumber>
    </recommendedName>
    <alternativeName>
        <fullName>Pyrroline-5-carboxylate reductase-like protein</fullName>
    </alternativeName>
</protein>
<comment type="function">
    <text evidence="2">Oxidoreductase that catalyzes the last step in proline biosynthesis, which corresponds to the reduction of pyrroline-5-carboxylate (P5C) to L-proline using NAD(P)H. Proline is synthesized from either glutamate or ornithine; both are converted to P5C, and then to proline via pyrroline-5-carboxylate reductases (PYCRs). PYCR3 is exclusively linked to the biosynthesis of proline from ornithine.</text>
</comment>
<comment type="catalytic activity">
    <reaction evidence="2">
        <text>L-proline + NADP(+) = (S)-1-pyrroline-5-carboxylate + NADPH + 2 H(+)</text>
        <dbReference type="Rhea" id="RHEA:14109"/>
        <dbReference type="ChEBI" id="CHEBI:15378"/>
        <dbReference type="ChEBI" id="CHEBI:17388"/>
        <dbReference type="ChEBI" id="CHEBI:57783"/>
        <dbReference type="ChEBI" id="CHEBI:58349"/>
        <dbReference type="ChEBI" id="CHEBI:60039"/>
        <dbReference type="EC" id="1.5.1.2"/>
    </reaction>
    <physiologicalReaction direction="right-to-left" evidence="2">
        <dbReference type="Rhea" id="RHEA:14111"/>
    </physiologicalReaction>
</comment>
<comment type="catalytic activity">
    <reaction evidence="2">
        <text>L-proline + NAD(+) = (S)-1-pyrroline-5-carboxylate + NADH + 2 H(+)</text>
        <dbReference type="Rhea" id="RHEA:14105"/>
        <dbReference type="ChEBI" id="CHEBI:15378"/>
        <dbReference type="ChEBI" id="CHEBI:17388"/>
        <dbReference type="ChEBI" id="CHEBI:57540"/>
        <dbReference type="ChEBI" id="CHEBI:57945"/>
        <dbReference type="ChEBI" id="CHEBI:60039"/>
        <dbReference type="EC" id="1.5.1.2"/>
    </reaction>
    <physiologicalReaction direction="right-to-left" evidence="2">
        <dbReference type="Rhea" id="RHEA:14107"/>
    </physiologicalReaction>
</comment>
<comment type="pathway">
    <text evidence="2">Amino-acid biosynthesis; L-proline biosynthesis; L-proline from L-glutamate 5-semialdehyde: step 1/1.</text>
</comment>
<comment type="subunit">
    <text evidence="1">Homodecamer; composed of 5 homodimers.</text>
</comment>
<comment type="subcellular location">
    <subcellularLocation>
        <location evidence="2">Cytoplasm</location>
    </subcellularLocation>
</comment>
<comment type="similarity">
    <text evidence="3">Belongs to the pyrroline-5-carboxylate reductase family.</text>
</comment>
<evidence type="ECO:0000250" key="1">
    <source>
        <dbReference type="UniProtKB" id="P32322"/>
    </source>
</evidence>
<evidence type="ECO:0000250" key="2">
    <source>
        <dbReference type="UniProtKB" id="Q53H96"/>
    </source>
</evidence>
<evidence type="ECO:0000305" key="3"/>
<accession>Q58D08</accession>